<protein>
    <recommendedName>
        <fullName evidence="1">Oligoribonuclease</fullName>
        <ecNumber evidence="1">3.1.15.-</ecNumber>
    </recommendedName>
</protein>
<accession>Q3IG97</accession>
<dbReference type="EC" id="3.1.15.-" evidence="1"/>
<dbReference type="EMBL" id="CR954246">
    <property type="protein sequence ID" value="CAI85584.1"/>
    <property type="molecule type" value="Genomic_DNA"/>
</dbReference>
<dbReference type="SMR" id="Q3IG97"/>
<dbReference type="STRING" id="326442.PSHAa0488"/>
<dbReference type="KEGG" id="pha:PSHAa0488"/>
<dbReference type="PATRIC" id="fig|326442.8.peg.464"/>
<dbReference type="eggNOG" id="COG1949">
    <property type="taxonomic scope" value="Bacteria"/>
</dbReference>
<dbReference type="HOGENOM" id="CLU_064761_2_0_6"/>
<dbReference type="BioCyc" id="PHAL326442:PSHA_RS02365-MONOMER"/>
<dbReference type="Proteomes" id="UP000006843">
    <property type="component" value="Chromosome I"/>
</dbReference>
<dbReference type="GO" id="GO:0005737">
    <property type="term" value="C:cytoplasm"/>
    <property type="evidence" value="ECO:0007669"/>
    <property type="project" value="UniProtKB-SubCell"/>
</dbReference>
<dbReference type="GO" id="GO:0000175">
    <property type="term" value="F:3'-5'-RNA exonuclease activity"/>
    <property type="evidence" value="ECO:0007669"/>
    <property type="project" value="InterPro"/>
</dbReference>
<dbReference type="GO" id="GO:0003676">
    <property type="term" value="F:nucleic acid binding"/>
    <property type="evidence" value="ECO:0007669"/>
    <property type="project" value="InterPro"/>
</dbReference>
<dbReference type="GO" id="GO:0006259">
    <property type="term" value="P:DNA metabolic process"/>
    <property type="evidence" value="ECO:0007669"/>
    <property type="project" value="UniProtKB-ARBA"/>
</dbReference>
<dbReference type="CDD" id="cd06135">
    <property type="entry name" value="Orn"/>
    <property type="match status" value="1"/>
</dbReference>
<dbReference type="FunFam" id="3.30.420.10:FF:000003">
    <property type="entry name" value="Oligoribonuclease"/>
    <property type="match status" value="1"/>
</dbReference>
<dbReference type="Gene3D" id="3.30.420.10">
    <property type="entry name" value="Ribonuclease H-like superfamily/Ribonuclease H"/>
    <property type="match status" value="1"/>
</dbReference>
<dbReference type="HAMAP" id="MF_00045">
    <property type="entry name" value="Oligoribonuclease"/>
    <property type="match status" value="1"/>
</dbReference>
<dbReference type="InterPro" id="IPR013520">
    <property type="entry name" value="Exonuclease_RNaseT/DNA_pol3"/>
</dbReference>
<dbReference type="InterPro" id="IPR022894">
    <property type="entry name" value="Oligoribonuclease"/>
</dbReference>
<dbReference type="InterPro" id="IPR012337">
    <property type="entry name" value="RNaseH-like_sf"/>
</dbReference>
<dbReference type="InterPro" id="IPR036397">
    <property type="entry name" value="RNaseH_sf"/>
</dbReference>
<dbReference type="NCBIfam" id="NF003765">
    <property type="entry name" value="PRK05359.1"/>
    <property type="match status" value="1"/>
</dbReference>
<dbReference type="PANTHER" id="PTHR11046">
    <property type="entry name" value="OLIGORIBONUCLEASE, MITOCHONDRIAL"/>
    <property type="match status" value="1"/>
</dbReference>
<dbReference type="PANTHER" id="PTHR11046:SF0">
    <property type="entry name" value="OLIGORIBONUCLEASE, MITOCHONDRIAL"/>
    <property type="match status" value="1"/>
</dbReference>
<dbReference type="Pfam" id="PF00929">
    <property type="entry name" value="RNase_T"/>
    <property type="match status" value="1"/>
</dbReference>
<dbReference type="SMART" id="SM00479">
    <property type="entry name" value="EXOIII"/>
    <property type="match status" value="1"/>
</dbReference>
<dbReference type="SUPFAM" id="SSF53098">
    <property type="entry name" value="Ribonuclease H-like"/>
    <property type="match status" value="1"/>
</dbReference>
<sequence length="181" mass="20745">MNINKSNLIWLDLEMTGLEPETDKILEIATVVTDADLNILAEGPTIAIHQSNELLDNMDEWCTTQHGKSGLTARCKASTYDEAYAVEQTIAFLKQWVPAGASPMCGNSIGQDRRFMNKYMRELEDFFHYRNLDVSTIKELARRWKPEVLAQVNKKGSHLALDDIKDSIMELKVYREKFFNL</sequence>
<evidence type="ECO:0000255" key="1">
    <source>
        <dbReference type="HAMAP-Rule" id="MF_00045"/>
    </source>
</evidence>
<keyword id="KW-0963">Cytoplasm</keyword>
<keyword id="KW-0269">Exonuclease</keyword>
<keyword id="KW-0378">Hydrolase</keyword>
<keyword id="KW-0540">Nuclease</keyword>
<keyword id="KW-1185">Reference proteome</keyword>
<gene>
    <name evidence="1" type="primary">orn</name>
    <name type="ordered locus">PSHAa0488</name>
</gene>
<organism>
    <name type="scientific">Pseudoalteromonas translucida (strain TAC 125)</name>
    <dbReference type="NCBI Taxonomy" id="326442"/>
    <lineage>
        <taxon>Bacteria</taxon>
        <taxon>Pseudomonadati</taxon>
        <taxon>Pseudomonadota</taxon>
        <taxon>Gammaproteobacteria</taxon>
        <taxon>Alteromonadales</taxon>
        <taxon>Pseudoalteromonadaceae</taxon>
        <taxon>Pseudoalteromonas</taxon>
    </lineage>
</organism>
<feature type="chain" id="PRO_1000004274" description="Oligoribonuclease">
    <location>
        <begin position="1"/>
        <end position="181"/>
    </location>
</feature>
<feature type="domain" description="Exonuclease" evidence="1">
    <location>
        <begin position="8"/>
        <end position="171"/>
    </location>
</feature>
<feature type="active site" evidence="1">
    <location>
        <position position="129"/>
    </location>
</feature>
<name>ORN_PSET1</name>
<reference key="1">
    <citation type="journal article" date="2005" name="Genome Res.">
        <title>Coping with cold: the genome of the versatile marine Antarctica bacterium Pseudoalteromonas haloplanktis TAC125.</title>
        <authorList>
            <person name="Medigue C."/>
            <person name="Krin E."/>
            <person name="Pascal G."/>
            <person name="Barbe V."/>
            <person name="Bernsel A."/>
            <person name="Bertin P.N."/>
            <person name="Cheung F."/>
            <person name="Cruveiller S."/>
            <person name="D'Amico S."/>
            <person name="Duilio A."/>
            <person name="Fang G."/>
            <person name="Feller G."/>
            <person name="Ho C."/>
            <person name="Mangenot S."/>
            <person name="Marino G."/>
            <person name="Nilsson J."/>
            <person name="Parrilli E."/>
            <person name="Rocha E.P.C."/>
            <person name="Rouy Z."/>
            <person name="Sekowska A."/>
            <person name="Tutino M.L."/>
            <person name="Vallenet D."/>
            <person name="von Heijne G."/>
            <person name="Danchin A."/>
        </authorList>
    </citation>
    <scope>NUCLEOTIDE SEQUENCE [LARGE SCALE GENOMIC DNA]</scope>
    <source>
        <strain>TAC 125</strain>
    </source>
</reference>
<comment type="function">
    <text evidence="1">3'-to-5' exoribonuclease specific for small oligoribonucleotides.</text>
</comment>
<comment type="subcellular location">
    <subcellularLocation>
        <location evidence="1">Cytoplasm</location>
    </subcellularLocation>
</comment>
<comment type="similarity">
    <text evidence="1">Belongs to the oligoribonuclease family.</text>
</comment>
<proteinExistence type="inferred from homology"/>